<organism>
    <name type="scientific">Helicobacter pylori (strain ATCC 700392 / 26695)</name>
    <name type="common">Campylobacter pylori</name>
    <dbReference type="NCBI Taxonomy" id="85962"/>
    <lineage>
        <taxon>Bacteria</taxon>
        <taxon>Pseudomonadati</taxon>
        <taxon>Campylobacterota</taxon>
        <taxon>Epsilonproteobacteria</taxon>
        <taxon>Campylobacterales</taxon>
        <taxon>Helicobacteraceae</taxon>
        <taxon>Helicobacter</taxon>
    </lineage>
</organism>
<gene>
    <name evidence="2" type="primary">lpxA</name>
    <name type="ordered locus">HP_1375</name>
</gene>
<accession>O25927</accession>
<feature type="chain" id="PRO_0000188052" description="Acyl-[acyl-carrier-protein]--UDP-N-acetylglucosamine O-acyltransferase">
    <location>
        <begin position="1"/>
        <end position="270"/>
    </location>
</feature>
<feature type="binding site">
    <location>
        <begin position="69"/>
        <end position="72"/>
    </location>
    <ligand>
        <name>substrate</name>
    </ligand>
</feature>
<feature type="binding site" evidence="1">
    <location>
        <position position="121"/>
    </location>
    <ligand>
        <name>substrate</name>
    </ligand>
</feature>
<feature type="binding site" evidence="1">
    <location>
        <position position="140"/>
    </location>
    <ligand>
        <name>substrate</name>
    </ligand>
</feature>
<feature type="binding site" evidence="1">
    <location>
        <position position="157"/>
    </location>
    <ligand>
        <name>substrate</name>
    </ligand>
</feature>
<feature type="strand" evidence="3">
    <location>
        <begin position="14"/>
        <end position="16"/>
    </location>
</feature>
<feature type="strand" evidence="3">
    <location>
        <begin position="48"/>
        <end position="52"/>
    </location>
</feature>
<feature type="strand" evidence="3">
    <location>
        <begin position="63"/>
        <end position="65"/>
    </location>
</feature>
<feature type="strand" evidence="3">
    <location>
        <begin position="79"/>
        <end position="82"/>
    </location>
</feature>
<feature type="turn" evidence="3">
    <location>
        <begin position="99"/>
        <end position="102"/>
    </location>
</feature>
<feature type="strand" evidence="3">
    <location>
        <begin position="103"/>
        <end position="107"/>
    </location>
</feature>
<feature type="strand" evidence="3">
    <location>
        <begin position="175"/>
        <end position="177"/>
    </location>
</feature>
<feature type="strand" evidence="3">
    <location>
        <begin position="181"/>
        <end position="184"/>
    </location>
</feature>
<feature type="strand" evidence="3">
    <location>
        <begin position="189"/>
        <end position="193"/>
    </location>
</feature>
<feature type="helix" evidence="3">
    <location>
        <begin position="195"/>
        <end position="201"/>
    </location>
</feature>
<feature type="helix" evidence="3">
    <location>
        <begin position="204"/>
        <end position="217"/>
    </location>
</feature>
<feature type="strand" evidence="3">
    <location>
        <begin position="220"/>
        <end position="222"/>
    </location>
</feature>
<feature type="helix" evidence="3">
    <location>
        <begin position="224"/>
        <end position="234"/>
    </location>
</feature>
<feature type="helix" evidence="3">
    <location>
        <begin position="239"/>
        <end position="250"/>
    </location>
</feature>
<protein>
    <recommendedName>
        <fullName evidence="2">Acyl-[acyl-carrier-protein]--UDP-N-acetylglucosamine O-acyltransferase</fullName>
        <shortName evidence="2">UDP-N-acetylglucosamine acyltransferase</shortName>
        <ecNumber evidence="2">2.3.1.129</ecNumber>
    </recommendedName>
</protein>
<comment type="function">
    <text evidence="2">Involved in the biosynthesis of lipid A, a phosphorylated glycolipid that anchors the lipopolysaccharide to the outer membrane of the cell.</text>
</comment>
<comment type="catalytic activity">
    <reaction evidence="2">
        <text>a (3R)-hydroxyacyl-[ACP] + UDP-N-acetyl-alpha-D-glucosamine = a UDP-3-O-[(3R)-3-hydroxyacyl]-N-acetyl-alpha-D-glucosamine + holo-[ACP]</text>
        <dbReference type="Rhea" id="RHEA:67812"/>
        <dbReference type="Rhea" id="RHEA-COMP:9685"/>
        <dbReference type="Rhea" id="RHEA-COMP:9945"/>
        <dbReference type="ChEBI" id="CHEBI:57705"/>
        <dbReference type="ChEBI" id="CHEBI:64479"/>
        <dbReference type="ChEBI" id="CHEBI:78827"/>
        <dbReference type="ChEBI" id="CHEBI:173225"/>
        <dbReference type="EC" id="2.3.1.129"/>
    </reaction>
</comment>
<comment type="pathway">
    <text evidence="2">Glycolipid biosynthesis; lipid IV(A) biosynthesis; lipid IV(A) from (3R)-3-hydroxytetradecanoyl-[acyl-carrier-protein] and UDP-N-acetyl-alpha-D-glucosamine: step 1/6.</text>
</comment>
<comment type="subunit">
    <text evidence="2">Homotrimer.</text>
</comment>
<comment type="subcellular location">
    <subcellularLocation>
        <location evidence="2">Cytoplasm</location>
    </subcellularLocation>
</comment>
<comment type="similarity">
    <text evidence="2">Belongs to the transferase hexapeptide repeat family. LpxA subfamily.</text>
</comment>
<keyword id="KW-0002">3D-structure</keyword>
<keyword id="KW-0012">Acyltransferase</keyword>
<keyword id="KW-0963">Cytoplasm</keyword>
<keyword id="KW-0441">Lipid A biosynthesis</keyword>
<keyword id="KW-0444">Lipid biosynthesis</keyword>
<keyword id="KW-0443">Lipid metabolism</keyword>
<keyword id="KW-1185">Reference proteome</keyword>
<keyword id="KW-0677">Repeat</keyword>
<keyword id="KW-0808">Transferase</keyword>
<dbReference type="EC" id="2.3.1.129" evidence="2"/>
<dbReference type="EMBL" id="AE000511">
    <property type="protein sequence ID" value="AAD08418.1"/>
    <property type="molecule type" value="Genomic_DNA"/>
</dbReference>
<dbReference type="PIR" id="G64691">
    <property type="entry name" value="G64691"/>
</dbReference>
<dbReference type="RefSeq" id="NP_208166.1">
    <property type="nucleotide sequence ID" value="NC_000915.1"/>
</dbReference>
<dbReference type="RefSeq" id="WP_000034151.1">
    <property type="nucleotide sequence ID" value="NC_018939.1"/>
</dbReference>
<dbReference type="PDB" id="1J2Z">
    <property type="method" value="X-ray"/>
    <property type="resolution" value="2.10 A"/>
    <property type="chains" value="A=1-270"/>
</dbReference>
<dbReference type="PDBsum" id="1J2Z"/>
<dbReference type="SMR" id="O25927"/>
<dbReference type="FunCoup" id="O25927">
    <property type="interactions" value="314"/>
</dbReference>
<dbReference type="STRING" id="85962.HP_1375"/>
<dbReference type="DrugBank" id="DB08558">
    <property type="generic name" value="2-HYDROXYMETHYL-6-OCTYLSULFANYL-TETRAHYDRO-PYRAN-3,4,5-TRIOL"/>
</dbReference>
<dbReference type="DrugBank" id="DB01694">
    <property type="generic name" value="D-tartaric acid"/>
</dbReference>
<dbReference type="PaxDb" id="85962-C694_07095"/>
<dbReference type="EnsemblBacteria" id="AAD08418">
    <property type="protein sequence ID" value="AAD08418"/>
    <property type="gene ID" value="HP_1375"/>
</dbReference>
<dbReference type="KEGG" id="heo:C694_07095"/>
<dbReference type="KEGG" id="hpy:HP_1375"/>
<dbReference type="PATRIC" id="fig|85962.47.peg.1472"/>
<dbReference type="eggNOG" id="COG1043">
    <property type="taxonomic scope" value="Bacteria"/>
</dbReference>
<dbReference type="InParanoid" id="O25927"/>
<dbReference type="OrthoDB" id="9807278at2"/>
<dbReference type="PhylomeDB" id="O25927"/>
<dbReference type="BioCyc" id="MetaCyc:HP_RS06790-MONOMER"/>
<dbReference type="UniPathway" id="UPA00359">
    <property type="reaction ID" value="UER00477"/>
</dbReference>
<dbReference type="EvolutionaryTrace" id="O25927"/>
<dbReference type="Proteomes" id="UP000000429">
    <property type="component" value="Chromosome"/>
</dbReference>
<dbReference type="GO" id="GO:0005737">
    <property type="term" value="C:cytoplasm"/>
    <property type="evidence" value="ECO:0007669"/>
    <property type="project" value="UniProtKB-SubCell"/>
</dbReference>
<dbReference type="GO" id="GO:0016020">
    <property type="term" value="C:membrane"/>
    <property type="evidence" value="ECO:0007669"/>
    <property type="project" value="GOC"/>
</dbReference>
<dbReference type="GO" id="GO:0008780">
    <property type="term" value="F:acyl-[acyl-carrier-protein]-UDP-N-acetylglucosamine O-acyltransferase activity"/>
    <property type="evidence" value="ECO:0007669"/>
    <property type="project" value="UniProtKB-UniRule"/>
</dbReference>
<dbReference type="GO" id="GO:0009245">
    <property type="term" value="P:lipid A biosynthetic process"/>
    <property type="evidence" value="ECO:0007669"/>
    <property type="project" value="UniProtKB-UniRule"/>
</dbReference>
<dbReference type="CDD" id="cd03351">
    <property type="entry name" value="LbH_UDP-GlcNAc_AT"/>
    <property type="match status" value="1"/>
</dbReference>
<dbReference type="Gene3D" id="2.160.10.10">
    <property type="entry name" value="Hexapeptide repeat proteins"/>
    <property type="match status" value="1"/>
</dbReference>
<dbReference type="Gene3D" id="1.20.1180.10">
    <property type="entry name" value="Udp N-acetylglucosamine O-acyltransferase, C-terminal domain"/>
    <property type="match status" value="1"/>
</dbReference>
<dbReference type="HAMAP" id="MF_00387">
    <property type="entry name" value="LpxA"/>
    <property type="match status" value="1"/>
</dbReference>
<dbReference type="InterPro" id="IPR029098">
    <property type="entry name" value="Acetyltransf_C"/>
</dbReference>
<dbReference type="InterPro" id="IPR037157">
    <property type="entry name" value="Acetyltransf_C_sf"/>
</dbReference>
<dbReference type="InterPro" id="IPR001451">
    <property type="entry name" value="Hexapep"/>
</dbReference>
<dbReference type="InterPro" id="IPR010137">
    <property type="entry name" value="Lipid_A_LpxA"/>
</dbReference>
<dbReference type="InterPro" id="IPR011004">
    <property type="entry name" value="Trimer_LpxA-like_sf"/>
</dbReference>
<dbReference type="NCBIfam" id="TIGR01852">
    <property type="entry name" value="lipid_A_lpxA"/>
    <property type="match status" value="1"/>
</dbReference>
<dbReference type="NCBIfam" id="NF003657">
    <property type="entry name" value="PRK05289.1"/>
    <property type="match status" value="1"/>
</dbReference>
<dbReference type="PANTHER" id="PTHR43480">
    <property type="entry name" value="ACYL-[ACYL-CARRIER-PROTEIN]--UDP-N-ACETYLGLUCOSAMINE O-ACYLTRANSFERASE"/>
    <property type="match status" value="1"/>
</dbReference>
<dbReference type="PANTHER" id="PTHR43480:SF1">
    <property type="entry name" value="ACYL-[ACYL-CARRIER-PROTEIN]--UDP-N-ACETYLGLUCOSAMINE O-ACYLTRANSFERASE, MITOCHONDRIAL-RELATED"/>
    <property type="match status" value="1"/>
</dbReference>
<dbReference type="Pfam" id="PF13720">
    <property type="entry name" value="Acetyltransf_11"/>
    <property type="match status" value="1"/>
</dbReference>
<dbReference type="Pfam" id="PF00132">
    <property type="entry name" value="Hexapep"/>
    <property type="match status" value="1"/>
</dbReference>
<dbReference type="PIRSF" id="PIRSF000456">
    <property type="entry name" value="UDP-GlcNAc_acltr"/>
    <property type="match status" value="1"/>
</dbReference>
<dbReference type="SUPFAM" id="SSF51161">
    <property type="entry name" value="Trimeric LpxA-like enzymes"/>
    <property type="match status" value="1"/>
</dbReference>
<dbReference type="PROSITE" id="PS00101">
    <property type="entry name" value="HEXAPEP_TRANSFERASES"/>
    <property type="match status" value="1"/>
</dbReference>
<name>LPXA_HELPY</name>
<evidence type="ECO:0000250" key="1"/>
<evidence type="ECO:0000255" key="2">
    <source>
        <dbReference type="HAMAP-Rule" id="MF_00387"/>
    </source>
</evidence>
<evidence type="ECO:0007829" key="3">
    <source>
        <dbReference type="PDB" id="1J2Z"/>
    </source>
</evidence>
<reference key="1">
    <citation type="journal article" date="1997" name="Nature">
        <title>The complete genome sequence of the gastric pathogen Helicobacter pylori.</title>
        <authorList>
            <person name="Tomb J.-F."/>
            <person name="White O."/>
            <person name="Kerlavage A.R."/>
            <person name="Clayton R.A."/>
            <person name="Sutton G.G."/>
            <person name="Fleischmann R.D."/>
            <person name="Ketchum K.A."/>
            <person name="Klenk H.-P."/>
            <person name="Gill S.R."/>
            <person name="Dougherty B.A."/>
            <person name="Nelson K.E."/>
            <person name="Quackenbush J."/>
            <person name="Zhou L."/>
            <person name="Kirkness E.F."/>
            <person name="Peterson S.N."/>
            <person name="Loftus B.J."/>
            <person name="Richardson D.L."/>
            <person name="Dodson R.J."/>
            <person name="Khalak H.G."/>
            <person name="Glodek A."/>
            <person name="McKenney K."/>
            <person name="FitzGerald L.M."/>
            <person name="Lee N."/>
            <person name="Adams M.D."/>
            <person name="Hickey E.K."/>
            <person name="Berg D.E."/>
            <person name="Gocayne J.D."/>
            <person name="Utterback T.R."/>
            <person name="Peterson J.D."/>
            <person name="Kelley J.M."/>
            <person name="Cotton M.D."/>
            <person name="Weidman J.F."/>
            <person name="Fujii C."/>
            <person name="Bowman C."/>
            <person name="Watthey L."/>
            <person name="Wallin E."/>
            <person name="Hayes W.S."/>
            <person name="Borodovsky M."/>
            <person name="Karp P.D."/>
            <person name="Smith H.O."/>
            <person name="Fraser C.M."/>
            <person name="Venter J.C."/>
        </authorList>
    </citation>
    <scope>NUCLEOTIDE SEQUENCE [LARGE SCALE GENOMIC DNA]</scope>
    <source>
        <strain>ATCC 700392 / 26695</strain>
    </source>
</reference>
<reference key="2">
    <citation type="journal article" date="2003" name="Proteins">
        <title>Crystal structure of UDP-N-acetylglucosamine acyltransferase from Helicobacter pylori.</title>
        <authorList>
            <person name="Lee B.I."/>
            <person name="Suh S.W."/>
        </authorList>
    </citation>
    <scope>X-RAY CRYSTALLOGRAPHY (2.10 ANGSTROMS) IN COMPLEX WITH R-3-HYDROXY-ACYL CARRIER PROTEIN</scope>
    <scope>SUBUNIT</scope>
</reference>
<sequence length="270" mass="29855">MSKIAKTAIISPKAEINKGVEIGEFCVIGDGVKLDEGVKLHNNVTLQGHTFVGKNTEIFPFAVLGTQPQDLKYKGEYSELIIGEDNLIREFCMINPGTEGGIKKTLIGDKNLLMAYVHVAHDCVIGSHCILANGVTLAGHIEIGDYVNIGGLTAIHQFVRIAKGCMIAGKSALGKDVPPYCTVEGNRAFIRGLNRHRMRQLLESKDIDFIYALYKRLFRPIPSLRESAKLELEEHANNPFVKEICSFILESSRGVAYKSSEYSSEEKQEE</sequence>
<proteinExistence type="evidence at protein level"/>